<name>QTRT2_IXOSC</name>
<dbReference type="EMBL" id="DS861789">
    <property type="protein sequence ID" value="EEC14123.1"/>
    <property type="molecule type" value="Genomic_DNA"/>
</dbReference>
<dbReference type="RefSeq" id="XP_002411784.1">
    <property type="nucleotide sequence ID" value="XM_002411739.1"/>
</dbReference>
<dbReference type="SMR" id="B7Q5K1"/>
<dbReference type="FunCoup" id="B7Q5K1">
    <property type="interactions" value="1121"/>
</dbReference>
<dbReference type="STRING" id="6945.B7Q5K1"/>
<dbReference type="PaxDb" id="6945-B7Q5K1"/>
<dbReference type="EnsemblMetazoa" id="ISCW021855-RA">
    <property type="protein sequence ID" value="ISCW021855-PA"/>
    <property type="gene ID" value="ISCW021855"/>
</dbReference>
<dbReference type="EnsemblMetazoa" id="XM_002411739.5">
    <property type="protein sequence ID" value="XP_002411784.4"/>
    <property type="gene ID" value="LOC8036228"/>
</dbReference>
<dbReference type="KEGG" id="isc:8036228"/>
<dbReference type="VEuPathDB" id="VectorBase:ISCI021855"/>
<dbReference type="VEuPathDB" id="VectorBase:ISCP_011841"/>
<dbReference type="VEuPathDB" id="VectorBase:ISCW021855"/>
<dbReference type="HOGENOM" id="CLU_037350_0_0_1"/>
<dbReference type="InParanoid" id="B7Q5K1"/>
<dbReference type="OMA" id="MAGSRMK"/>
<dbReference type="OrthoDB" id="27601at2759"/>
<dbReference type="PhylomeDB" id="B7Q5K1"/>
<dbReference type="Proteomes" id="UP000001555">
    <property type="component" value="Unassembled WGS sequence"/>
</dbReference>
<dbReference type="GO" id="GO:0005737">
    <property type="term" value="C:cytoplasm"/>
    <property type="evidence" value="ECO:0007669"/>
    <property type="project" value="UniProtKB-SubCell"/>
</dbReference>
<dbReference type="GO" id="GO:0046872">
    <property type="term" value="F:metal ion binding"/>
    <property type="evidence" value="ECO:0007669"/>
    <property type="project" value="UniProtKB-KW"/>
</dbReference>
<dbReference type="GO" id="GO:0008479">
    <property type="term" value="F:tRNA-guanosine(34) queuine transglycosylase activity"/>
    <property type="evidence" value="ECO:0007669"/>
    <property type="project" value="UniProtKB-UniRule"/>
</dbReference>
<dbReference type="GO" id="GO:0101030">
    <property type="term" value="P:tRNA-guanine transglycosylation"/>
    <property type="evidence" value="ECO:0000318"/>
    <property type="project" value="GO_Central"/>
</dbReference>
<dbReference type="FunFam" id="3.20.20.105:FF:000002">
    <property type="entry name" value="Queuine tRNA-ribosyltransferase accessory subunit 2"/>
    <property type="match status" value="1"/>
</dbReference>
<dbReference type="Gene3D" id="3.20.20.105">
    <property type="entry name" value="Queuine tRNA-ribosyltransferase-like"/>
    <property type="match status" value="1"/>
</dbReference>
<dbReference type="HAMAP" id="MF_03043">
    <property type="entry name" value="QTRT2"/>
    <property type="match status" value="1"/>
</dbReference>
<dbReference type="InterPro" id="IPR028592">
    <property type="entry name" value="QTRTD1"/>
</dbReference>
<dbReference type="InterPro" id="IPR050852">
    <property type="entry name" value="Queuine_tRNA-ribosyltrfase"/>
</dbReference>
<dbReference type="InterPro" id="IPR036511">
    <property type="entry name" value="TGT-like_sf"/>
</dbReference>
<dbReference type="InterPro" id="IPR002616">
    <property type="entry name" value="tRNA_ribo_trans-like"/>
</dbReference>
<dbReference type="NCBIfam" id="TIGR00449">
    <property type="entry name" value="tgt_general"/>
    <property type="match status" value="1"/>
</dbReference>
<dbReference type="PANTHER" id="PTHR46064">
    <property type="entry name" value="QUEUINE TRNA-RIBOSYLTRANSFERASE ACCESSORY SUBUNIT 2"/>
    <property type="match status" value="1"/>
</dbReference>
<dbReference type="PANTHER" id="PTHR46064:SF1">
    <property type="entry name" value="QUEUINE TRNA-RIBOSYLTRANSFERASE ACCESSORY SUBUNIT 2"/>
    <property type="match status" value="1"/>
</dbReference>
<dbReference type="Pfam" id="PF01702">
    <property type="entry name" value="TGT"/>
    <property type="match status" value="1"/>
</dbReference>
<dbReference type="SUPFAM" id="SSF51713">
    <property type="entry name" value="tRNA-guanine transglycosylase"/>
    <property type="match status" value="1"/>
</dbReference>
<proteinExistence type="inferred from homology"/>
<protein>
    <recommendedName>
        <fullName evidence="1">Queuine tRNA-ribosyltransferase accessory subunit 2</fullName>
    </recommendedName>
    <alternativeName>
        <fullName evidence="1">Queuine tRNA-ribosyltransferase domain-containing protein 1</fullName>
    </alternativeName>
</protein>
<organism>
    <name type="scientific">Ixodes scapularis</name>
    <name type="common">Black-legged tick</name>
    <name type="synonym">Deer tick</name>
    <dbReference type="NCBI Taxonomy" id="6945"/>
    <lineage>
        <taxon>Eukaryota</taxon>
        <taxon>Metazoa</taxon>
        <taxon>Ecdysozoa</taxon>
        <taxon>Arthropoda</taxon>
        <taxon>Chelicerata</taxon>
        <taxon>Arachnida</taxon>
        <taxon>Acari</taxon>
        <taxon>Parasitiformes</taxon>
        <taxon>Ixodida</taxon>
        <taxon>Ixodoidea</taxon>
        <taxon>Ixodidae</taxon>
        <taxon>Ixodinae</taxon>
        <taxon>Ixodes</taxon>
    </lineage>
</organism>
<reference key="1">
    <citation type="submission" date="2008-03" db="EMBL/GenBank/DDBJ databases">
        <title>Annotation of Ixodes scapularis.</title>
        <authorList>
            <consortium name="Ixodes scapularis Genome Project Consortium"/>
            <person name="Caler E."/>
            <person name="Hannick L.I."/>
            <person name="Bidwell S."/>
            <person name="Joardar V."/>
            <person name="Thiagarajan M."/>
            <person name="Amedeo P."/>
            <person name="Galinsky K.J."/>
            <person name="Schobel S."/>
            <person name="Inman J."/>
            <person name="Hostetler J."/>
            <person name="Miller J."/>
            <person name="Hammond M."/>
            <person name="Megy K."/>
            <person name="Lawson D."/>
            <person name="Kodira C."/>
            <person name="Sutton G."/>
            <person name="Meyer J."/>
            <person name="Hill C.A."/>
            <person name="Birren B."/>
            <person name="Nene V."/>
            <person name="Collins F."/>
            <person name="Alarcon-Chaidez F."/>
            <person name="Wikel S."/>
            <person name="Strausberg R."/>
        </authorList>
    </citation>
    <scope>NUCLEOTIDE SEQUENCE [LARGE SCALE GENOMIC DNA]</scope>
    <source>
        <strain>Wikel</strain>
    </source>
</reference>
<accession>B7Q5K1</accession>
<evidence type="ECO:0000255" key="1">
    <source>
        <dbReference type="HAMAP-Rule" id="MF_03043"/>
    </source>
</evidence>
<gene>
    <name type="ORF">ISCW021855</name>
</gene>
<sequence>MRFSVVETFHGHRGRLGNICGLRIGTGEQCLDTPTCLLYTQAGSAPHLTRDMLHKLGDVENLPALFPLPPITSFVDSVMQFGKGLGSFVALQSHPSFIRIQDPMVTTPSGFNDKAGVSVWDQGGRVHLNPLSFTRMMEAFQPTCYQALCDSDTPQDASRKRLQRAVDRSVSLLDQCLAMKADSSCLQHSAILGSVQGGYNRDFREISAKETAKRDVDGFVIEGFHVNGPQTKSLKFEEVAEILEEVIALLPQDKPRFLHGVLRPEFILKAVLYGIDIFDASLAHAATEAGCALVFNCSSDKDLELMLGRDLLDQELEMDMKNARHREDFVPLLESCACYACTNFTRAYIHHLLNTGEMLGQVLLSLHNIHHFLGFLKSIRKFMVQHGAKELNGN</sequence>
<comment type="function">
    <text evidence="1">Non-catalytic subunit of the queuine tRNA-ribosyltransferase (TGT) that catalyzes the base-exchange of a guanine (G) residue with queuine (Q) at position 34 (anticodon wobble position) in tRNAs with GU(N) anticodons (tRNA-Asp, -Asn, -His and -Tyr), resulting in the hypermodified nucleoside queuosine (7-(((4,5-cis-dihydroxy-2-cyclopenten-1-yl)amino)methyl)-7-deazaguanosine).</text>
</comment>
<comment type="cofactor">
    <cofactor evidence="1">
        <name>Zn(2+)</name>
        <dbReference type="ChEBI" id="CHEBI:29105"/>
    </cofactor>
    <text evidence="1">Binds 1 zinc ion per subunit.</text>
</comment>
<comment type="subunit">
    <text evidence="1">Heterodimer of a catalytic subunit and an accessory subunit.</text>
</comment>
<comment type="subcellular location">
    <subcellularLocation>
        <location evidence="1">Cytoplasm</location>
    </subcellularLocation>
</comment>
<comment type="similarity">
    <text evidence="1">Belongs to the queuine tRNA-ribosyltransferase family. QTRT2 subfamily.</text>
</comment>
<feature type="chain" id="PRO_0000383944" description="Queuine tRNA-ribosyltransferase accessory subunit 2">
    <location>
        <begin position="1"/>
        <end position="394"/>
    </location>
</feature>
<feature type="binding site" evidence="1">
    <location>
        <position position="336"/>
    </location>
    <ligand>
        <name>Zn(2+)</name>
        <dbReference type="ChEBI" id="CHEBI:29105"/>
    </ligand>
</feature>
<feature type="binding site" evidence="1">
    <location>
        <position position="338"/>
    </location>
    <ligand>
        <name>Zn(2+)</name>
        <dbReference type="ChEBI" id="CHEBI:29105"/>
    </ligand>
</feature>
<feature type="binding site" evidence="1">
    <location>
        <position position="341"/>
    </location>
    <ligand>
        <name>Zn(2+)</name>
        <dbReference type="ChEBI" id="CHEBI:29105"/>
    </ligand>
</feature>
<feature type="binding site" evidence="1">
    <location>
        <position position="367"/>
    </location>
    <ligand>
        <name>Zn(2+)</name>
        <dbReference type="ChEBI" id="CHEBI:29105"/>
    </ligand>
</feature>
<keyword id="KW-0963">Cytoplasm</keyword>
<keyword id="KW-0479">Metal-binding</keyword>
<keyword id="KW-1185">Reference proteome</keyword>
<keyword id="KW-0819">tRNA processing</keyword>
<keyword id="KW-0862">Zinc</keyword>